<protein>
    <recommendedName>
        <fullName evidence="1">Uridylate kinase</fullName>
        <shortName evidence="1">UK</shortName>
        <ecNumber evidence="1">2.7.4.22</ecNumber>
    </recommendedName>
    <alternativeName>
        <fullName evidence="1">Uridine monophosphate kinase</fullName>
        <shortName evidence="1">UMP kinase</shortName>
        <shortName evidence="1">UMPK</shortName>
    </alternativeName>
</protein>
<keyword id="KW-0021">Allosteric enzyme</keyword>
<keyword id="KW-0067">ATP-binding</keyword>
<keyword id="KW-0963">Cytoplasm</keyword>
<keyword id="KW-0418">Kinase</keyword>
<keyword id="KW-0547">Nucleotide-binding</keyword>
<keyword id="KW-0665">Pyrimidine biosynthesis</keyword>
<keyword id="KW-1185">Reference proteome</keyword>
<keyword id="KW-0808">Transferase</keyword>
<organism>
    <name type="scientific">Bacillus cereus (strain ATCC 14579 / DSM 31 / CCUG 7414 / JCM 2152 / NBRC 15305 / NCIMB 9373 / NCTC 2599 / NRRL B-3711)</name>
    <dbReference type="NCBI Taxonomy" id="226900"/>
    <lineage>
        <taxon>Bacteria</taxon>
        <taxon>Bacillati</taxon>
        <taxon>Bacillota</taxon>
        <taxon>Bacilli</taxon>
        <taxon>Bacillales</taxon>
        <taxon>Bacillaceae</taxon>
        <taxon>Bacillus</taxon>
        <taxon>Bacillus cereus group</taxon>
    </lineage>
</organism>
<name>PYRH_BACCR</name>
<gene>
    <name evidence="1" type="primary">pyrH</name>
    <name type="ordered locus">BC_3823</name>
</gene>
<reference key="1">
    <citation type="journal article" date="2003" name="Nature">
        <title>Genome sequence of Bacillus cereus and comparative analysis with Bacillus anthracis.</title>
        <authorList>
            <person name="Ivanova N."/>
            <person name="Sorokin A."/>
            <person name="Anderson I."/>
            <person name="Galleron N."/>
            <person name="Candelon B."/>
            <person name="Kapatral V."/>
            <person name="Bhattacharyya A."/>
            <person name="Reznik G."/>
            <person name="Mikhailova N."/>
            <person name="Lapidus A."/>
            <person name="Chu L."/>
            <person name="Mazur M."/>
            <person name="Goltsman E."/>
            <person name="Larsen N."/>
            <person name="D'Souza M."/>
            <person name="Walunas T."/>
            <person name="Grechkin Y."/>
            <person name="Pusch G."/>
            <person name="Haselkorn R."/>
            <person name="Fonstein M."/>
            <person name="Ehrlich S.D."/>
            <person name="Overbeek R."/>
            <person name="Kyrpides N.C."/>
        </authorList>
    </citation>
    <scope>NUCLEOTIDE SEQUENCE [LARGE SCALE GENOMIC DNA]</scope>
    <source>
        <strain>ATCC 14579 / DSM 31 / CCUG 7414 / JCM 2152 / NBRC 15305 / NCIMB 9373 / NCTC 2599 / NRRL B-3711</strain>
    </source>
</reference>
<comment type="function">
    <text evidence="1">Catalyzes the reversible phosphorylation of UMP to UDP.</text>
</comment>
<comment type="catalytic activity">
    <reaction evidence="1">
        <text>UMP + ATP = UDP + ADP</text>
        <dbReference type="Rhea" id="RHEA:24400"/>
        <dbReference type="ChEBI" id="CHEBI:30616"/>
        <dbReference type="ChEBI" id="CHEBI:57865"/>
        <dbReference type="ChEBI" id="CHEBI:58223"/>
        <dbReference type="ChEBI" id="CHEBI:456216"/>
        <dbReference type="EC" id="2.7.4.22"/>
    </reaction>
</comment>
<comment type="activity regulation">
    <text evidence="1">Allosterically activated by GTP. Inhibited by UTP.</text>
</comment>
<comment type="pathway">
    <text evidence="1">Pyrimidine metabolism; CTP biosynthesis via de novo pathway; UDP from UMP (UMPK route): step 1/1.</text>
</comment>
<comment type="subunit">
    <text evidence="1">Homohexamer.</text>
</comment>
<comment type="subcellular location">
    <subcellularLocation>
        <location evidence="1">Cytoplasm</location>
    </subcellularLocation>
</comment>
<comment type="similarity">
    <text evidence="1">Belongs to the UMP kinase family.</text>
</comment>
<evidence type="ECO:0000255" key="1">
    <source>
        <dbReference type="HAMAP-Rule" id="MF_01220"/>
    </source>
</evidence>
<sequence length="240" mass="25900">MSKPKYNRVVLKLSGEALAGEQGFGINPTVIKSVAEQVKEIAELDVEVAVVVGGGNIWRGKIGSEMGMDRAGADYMGMLATVMNSLALQDSLENIGIQTRVQTSIEMRQVAEPYIRRKAVRHLEKKRVVIFAAGTGNPYFSTDTTAALRAAEIEADVILMAKNNVDGVYNADPSIDPTATKYETLTYLDVLKEGLGVMDSTASSLCMDNDIPLIVFSVMEKGNIKRAVLGENIGTVVRGK</sequence>
<proteinExistence type="inferred from homology"/>
<feature type="chain" id="PRO_0000143823" description="Uridylate kinase">
    <location>
        <begin position="1"/>
        <end position="240"/>
    </location>
</feature>
<feature type="region of interest" description="Involved in allosteric activation by GTP" evidence="1">
    <location>
        <begin position="20"/>
        <end position="25"/>
    </location>
</feature>
<feature type="binding site" evidence="1">
    <location>
        <begin position="12"/>
        <end position="15"/>
    </location>
    <ligand>
        <name>ATP</name>
        <dbReference type="ChEBI" id="CHEBI:30616"/>
    </ligand>
</feature>
<feature type="binding site" evidence="1">
    <location>
        <position position="54"/>
    </location>
    <ligand>
        <name>UMP</name>
        <dbReference type="ChEBI" id="CHEBI:57865"/>
    </ligand>
</feature>
<feature type="binding site" evidence="1">
    <location>
        <position position="55"/>
    </location>
    <ligand>
        <name>ATP</name>
        <dbReference type="ChEBI" id="CHEBI:30616"/>
    </ligand>
</feature>
<feature type="binding site" evidence="1">
    <location>
        <position position="59"/>
    </location>
    <ligand>
        <name>ATP</name>
        <dbReference type="ChEBI" id="CHEBI:30616"/>
    </ligand>
</feature>
<feature type="binding site" evidence="1">
    <location>
        <position position="74"/>
    </location>
    <ligand>
        <name>UMP</name>
        <dbReference type="ChEBI" id="CHEBI:57865"/>
    </ligand>
</feature>
<feature type="binding site" evidence="1">
    <location>
        <begin position="135"/>
        <end position="142"/>
    </location>
    <ligand>
        <name>UMP</name>
        <dbReference type="ChEBI" id="CHEBI:57865"/>
    </ligand>
</feature>
<feature type="binding site" evidence="1">
    <location>
        <position position="163"/>
    </location>
    <ligand>
        <name>ATP</name>
        <dbReference type="ChEBI" id="CHEBI:30616"/>
    </ligand>
</feature>
<feature type="binding site" evidence="1">
    <location>
        <position position="169"/>
    </location>
    <ligand>
        <name>ATP</name>
        <dbReference type="ChEBI" id="CHEBI:30616"/>
    </ligand>
</feature>
<feature type="binding site" evidence="1">
    <location>
        <position position="172"/>
    </location>
    <ligand>
        <name>ATP</name>
        <dbReference type="ChEBI" id="CHEBI:30616"/>
    </ligand>
</feature>
<accession>Q819Y0</accession>
<dbReference type="EC" id="2.7.4.22" evidence="1"/>
<dbReference type="EMBL" id="AE016877">
    <property type="protein sequence ID" value="AAP10745.1"/>
    <property type="molecule type" value="Genomic_DNA"/>
</dbReference>
<dbReference type="RefSeq" id="NP_833544.1">
    <property type="nucleotide sequence ID" value="NC_004722.1"/>
</dbReference>
<dbReference type="RefSeq" id="WP_000042668.1">
    <property type="nucleotide sequence ID" value="NZ_CP138336.1"/>
</dbReference>
<dbReference type="SMR" id="Q819Y0"/>
<dbReference type="STRING" id="226900.BC_3823"/>
<dbReference type="MetOSite" id="Q819Y0"/>
<dbReference type="KEGG" id="bce:BC3823"/>
<dbReference type="PATRIC" id="fig|226900.8.peg.3942"/>
<dbReference type="HOGENOM" id="CLU_033861_0_0_9"/>
<dbReference type="OrthoDB" id="9807458at2"/>
<dbReference type="UniPathway" id="UPA00159">
    <property type="reaction ID" value="UER00275"/>
</dbReference>
<dbReference type="Proteomes" id="UP000001417">
    <property type="component" value="Chromosome"/>
</dbReference>
<dbReference type="GO" id="GO:0005737">
    <property type="term" value="C:cytoplasm"/>
    <property type="evidence" value="ECO:0007669"/>
    <property type="project" value="UniProtKB-SubCell"/>
</dbReference>
<dbReference type="GO" id="GO:0005524">
    <property type="term" value="F:ATP binding"/>
    <property type="evidence" value="ECO:0007669"/>
    <property type="project" value="UniProtKB-KW"/>
</dbReference>
<dbReference type="GO" id="GO:0033862">
    <property type="term" value="F:UMP kinase activity"/>
    <property type="evidence" value="ECO:0000318"/>
    <property type="project" value="GO_Central"/>
</dbReference>
<dbReference type="GO" id="GO:0044210">
    <property type="term" value="P:'de novo' CTP biosynthetic process"/>
    <property type="evidence" value="ECO:0007669"/>
    <property type="project" value="UniProtKB-UniRule"/>
</dbReference>
<dbReference type="GO" id="GO:0006225">
    <property type="term" value="P:UDP biosynthetic process"/>
    <property type="evidence" value="ECO:0000318"/>
    <property type="project" value="GO_Central"/>
</dbReference>
<dbReference type="CDD" id="cd04254">
    <property type="entry name" value="AAK_UMPK-PyrH-Ec"/>
    <property type="match status" value="1"/>
</dbReference>
<dbReference type="FunFam" id="3.40.1160.10:FF:000001">
    <property type="entry name" value="Uridylate kinase"/>
    <property type="match status" value="1"/>
</dbReference>
<dbReference type="Gene3D" id="3.40.1160.10">
    <property type="entry name" value="Acetylglutamate kinase-like"/>
    <property type="match status" value="1"/>
</dbReference>
<dbReference type="HAMAP" id="MF_01220_B">
    <property type="entry name" value="PyrH_B"/>
    <property type="match status" value="1"/>
</dbReference>
<dbReference type="InterPro" id="IPR036393">
    <property type="entry name" value="AceGlu_kinase-like_sf"/>
</dbReference>
<dbReference type="InterPro" id="IPR001048">
    <property type="entry name" value="Asp/Glu/Uridylate_kinase"/>
</dbReference>
<dbReference type="InterPro" id="IPR011817">
    <property type="entry name" value="Uridylate_kinase"/>
</dbReference>
<dbReference type="InterPro" id="IPR015963">
    <property type="entry name" value="Uridylate_kinase_bac"/>
</dbReference>
<dbReference type="NCBIfam" id="TIGR02075">
    <property type="entry name" value="pyrH_bact"/>
    <property type="match status" value="1"/>
</dbReference>
<dbReference type="PANTHER" id="PTHR42833">
    <property type="entry name" value="URIDYLATE KINASE"/>
    <property type="match status" value="1"/>
</dbReference>
<dbReference type="PANTHER" id="PTHR42833:SF4">
    <property type="entry name" value="URIDYLATE KINASE PUMPKIN, CHLOROPLASTIC"/>
    <property type="match status" value="1"/>
</dbReference>
<dbReference type="Pfam" id="PF00696">
    <property type="entry name" value="AA_kinase"/>
    <property type="match status" value="1"/>
</dbReference>
<dbReference type="PIRSF" id="PIRSF005650">
    <property type="entry name" value="Uridylate_kin"/>
    <property type="match status" value="1"/>
</dbReference>
<dbReference type="SUPFAM" id="SSF53633">
    <property type="entry name" value="Carbamate kinase-like"/>
    <property type="match status" value="1"/>
</dbReference>